<feature type="chain" id="PRO_1000129179" description="Succinate--CoA ligase [ADP-forming] subunit beta">
    <location>
        <begin position="1"/>
        <end position="386"/>
    </location>
</feature>
<feature type="domain" description="ATP-grasp" evidence="1">
    <location>
        <begin position="9"/>
        <end position="244"/>
    </location>
</feature>
<feature type="binding site" evidence="1">
    <location>
        <position position="46"/>
    </location>
    <ligand>
        <name>ATP</name>
        <dbReference type="ChEBI" id="CHEBI:30616"/>
    </ligand>
</feature>
<feature type="binding site" evidence="1">
    <location>
        <begin position="53"/>
        <end position="55"/>
    </location>
    <ligand>
        <name>ATP</name>
        <dbReference type="ChEBI" id="CHEBI:30616"/>
    </ligand>
</feature>
<feature type="binding site" evidence="1">
    <location>
        <position position="99"/>
    </location>
    <ligand>
        <name>ATP</name>
        <dbReference type="ChEBI" id="CHEBI:30616"/>
    </ligand>
</feature>
<feature type="binding site" evidence="1">
    <location>
        <position position="102"/>
    </location>
    <ligand>
        <name>ATP</name>
        <dbReference type="ChEBI" id="CHEBI:30616"/>
    </ligand>
</feature>
<feature type="binding site" evidence="1">
    <location>
        <position position="107"/>
    </location>
    <ligand>
        <name>ATP</name>
        <dbReference type="ChEBI" id="CHEBI:30616"/>
    </ligand>
</feature>
<feature type="binding site" evidence="1">
    <location>
        <position position="199"/>
    </location>
    <ligand>
        <name>Mg(2+)</name>
        <dbReference type="ChEBI" id="CHEBI:18420"/>
    </ligand>
</feature>
<feature type="binding site" evidence="1">
    <location>
        <position position="213"/>
    </location>
    <ligand>
        <name>Mg(2+)</name>
        <dbReference type="ChEBI" id="CHEBI:18420"/>
    </ligand>
</feature>
<feature type="binding site" evidence="1">
    <location>
        <position position="264"/>
    </location>
    <ligand>
        <name>substrate</name>
        <note>ligand shared with subunit alpha</note>
    </ligand>
</feature>
<feature type="binding site" evidence="1">
    <location>
        <begin position="321"/>
        <end position="323"/>
    </location>
    <ligand>
        <name>substrate</name>
        <note>ligand shared with subunit alpha</note>
    </ligand>
</feature>
<organism>
    <name type="scientific">Delftia acidovorans (strain DSM 14801 / SPH-1)</name>
    <dbReference type="NCBI Taxonomy" id="398578"/>
    <lineage>
        <taxon>Bacteria</taxon>
        <taxon>Pseudomonadati</taxon>
        <taxon>Pseudomonadota</taxon>
        <taxon>Betaproteobacteria</taxon>
        <taxon>Burkholderiales</taxon>
        <taxon>Comamonadaceae</taxon>
        <taxon>Delftia</taxon>
    </lineage>
</organism>
<evidence type="ECO:0000255" key="1">
    <source>
        <dbReference type="HAMAP-Rule" id="MF_00558"/>
    </source>
</evidence>
<dbReference type="EC" id="6.2.1.5" evidence="1"/>
<dbReference type="EMBL" id="CP000884">
    <property type="protein sequence ID" value="ABX33515.1"/>
    <property type="molecule type" value="Genomic_DNA"/>
</dbReference>
<dbReference type="RefSeq" id="WP_012202801.1">
    <property type="nucleotide sequence ID" value="NC_010002.1"/>
</dbReference>
<dbReference type="SMR" id="A9BQA5"/>
<dbReference type="STRING" id="398578.Daci_0869"/>
<dbReference type="GeneID" id="24116466"/>
<dbReference type="KEGG" id="dac:Daci_0869"/>
<dbReference type="eggNOG" id="COG0045">
    <property type="taxonomic scope" value="Bacteria"/>
</dbReference>
<dbReference type="HOGENOM" id="CLU_037430_0_2_4"/>
<dbReference type="UniPathway" id="UPA00223">
    <property type="reaction ID" value="UER00999"/>
</dbReference>
<dbReference type="Proteomes" id="UP000000784">
    <property type="component" value="Chromosome"/>
</dbReference>
<dbReference type="GO" id="GO:0005829">
    <property type="term" value="C:cytosol"/>
    <property type="evidence" value="ECO:0007669"/>
    <property type="project" value="TreeGrafter"/>
</dbReference>
<dbReference type="GO" id="GO:0042709">
    <property type="term" value="C:succinate-CoA ligase complex"/>
    <property type="evidence" value="ECO:0007669"/>
    <property type="project" value="TreeGrafter"/>
</dbReference>
<dbReference type="GO" id="GO:0005524">
    <property type="term" value="F:ATP binding"/>
    <property type="evidence" value="ECO:0007669"/>
    <property type="project" value="UniProtKB-UniRule"/>
</dbReference>
<dbReference type="GO" id="GO:0000287">
    <property type="term" value="F:magnesium ion binding"/>
    <property type="evidence" value="ECO:0007669"/>
    <property type="project" value="UniProtKB-UniRule"/>
</dbReference>
<dbReference type="GO" id="GO:0004775">
    <property type="term" value="F:succinate-CoA ligase (ADP-forming) activity"/>
    <property type="evidence" value="ECO:0007669"/>
    <property type="project" value="UniProtKB-UniRule"/>
</dbReference>
<dbReference type="GO" id="GO:0004776">
    <property type="term" value="F:succinate-CoA ligase (GDP-forming) activity"/>
    <property type="evidence" value="ECO:0007669"/>
    <property type="project" value="RHEA"/>
</dbReference>
<dbReference type="GO" id="GO:0006104">
    <property type="term" value="P:succinyl-CoA metabolic process"/>
    <property type="evidence" value="ECO:0007669"/>
    <property type="project" value="TreeGrafter"/>
</dbReference>
<dbReference type="GO" id="GO:0006099">
    <property type="term" value="P:tricarboxylic acid cycle"/>
    <property type="evidence" value="ECO:0007669"/>
    <property type="project" value="UniProtKB-UniRule"/>
</dbReference>
<dbReference type="FunFam" id="3.30.1490.20:FF:000002">
    <property type="entry name" value="Succinate--CoA ligase [ADP-forming] subunit beta"/>
    <property type="match status" value="1"/>
</dbReference>
<dbReference type="FunFam" id="3.30.470.20:FF:000002">
    <property type="entry name" value="Succinate--CoA ligase [ADP-forming] subunit beta"/>
    <property type="match status" value="1"/>
</dbReference>
<dbReference type="FunFam" id="3.40.50.261:FF:000001">
    <property type="entry name" value="Succinate--CoA ligase [ADP-forming] subunit beta"/>
    <property type="match status" value="1"/>
</dbReference>
<dbReference type="Gene3D" id="3.30.1490.20">
    <property type="entry name" value="ATP-grasp fold, A domain"/>
    <property type="match status" value="1"/>
</dbReference>
<dbReference type="Gene3D" id="3.30.470.20">
    <property type="entry name" value="ATP-grasp fold, B domain"/>
    <property type="match status" value="1"/>
</dbReference>
<dbReference type="Gene3D" id="3.40.50.261">
    <property type="entry name" value="Succinyl-CoA synthetase domains"/>
    <property type="match status" value="1"/>
</dbReference>
<dbReference type="HAMAP" id="MF_00558">
    <property type="entry name" value="Succ_CoA_beta"/>
    <property type="match status" value="1"/>
</dbReference>
<dbReference type="InterPro" id="IPR011761">
    <property type="entry name" value="ATP-grasp"/>
</dbReference>
<dbReference type="InterPro" id="IPR013650">
    <property type="entry name" value="ATP-grasp_succ-CoA_synth-type"/>
</dbReference>
<dbReference type="InterPro" id="IPR013815">
    <property type="entry name" value="ATP_grasp_subdomain_1"/>
</dbReference>
<dbReference type="InterPro" id="IPR017866">
    <property type="entry name" value="Succ-CoA_synthase_bsu_CS"/>
</dbReference>
<dbReference type="InterPro" id="IPR005811">
    <property type="entry name" value="SUCC_ACL_C"/>
</dbReference>
<dbReference type="InterPro" id="IPR005809">
    <property type="entry name" value="Succ_CoA_ligase-like_bsu"/>
</dbReference>
<dbReference type="InterPro" id="IPR016102">
    <property type="entry name" value="Succinyl-CoA_synth-like"/>
</dbReference>
<dbReference type="NCBIfam" id="NF001913">
    <property type="entry name" value="PRK00696.1"/>
    <property type="match status" value="1"/>
</dbReference>
<dbReference type="NCBIfam" id="TIGR01016">
    <property type="entry name" value="sucCoAbeta"/>
    <property type="match status" value="1"/>
</dbReference>
<dbReference type="PANTHER" id="PTHR11815:SF10">
    <property type="entry name" value="SUCCINATE--COA LIGASE [GDP-FORMING] SUBUNIT BETA, MITOCHONDRIAL"/>
    <property type="match status" value="1"/>
</dbReference>
<dbReference type="PANTHER" id="PTHR11815">
    <property type="entry name" value="SUCCINYL-COA SYNTHETASE BETA CHAIN"/>
    <property type="match status" value="1"/>
</dbReference>
<dbReference type="Pfam" id="PF08442">
    <property type="entry name" value="ATP-grasp_2"/>
    <property type="match status" value="1"/>
</dbReference>
<dbReference type="Pfam" id="PF00549">
    <property type="entry name" value="Ligase_CoA"/>
    <property type="match status" value="1"/>
</dbReference>
<dbReference type="PIRSF" id="PIRSF001554">
    <property type="entry name" value="SucCS_beta"/>
    <property type="match status" value="1"/>
</dbReference>
<dbReference type="SUPFAM" id="SSF56059">
    <property type="entry name" value="Glutathione synthetase ATP-binding domain-like"/>
    <property type="match status" value="1"/>
</dbReference>
<dbReference type="SUPFAM" id="SSF52210">
    <property type="entry name" value="Succinyl-CoA synthetase domains"/>
    <property type="match status" value="1"/>
</dbReference>
<dbReference type="PROSITE" id="PS50975">
    <property type="entry name" value="ATP_GRASP"/>
    <property type="match status" value="1"/>
</dbReference>
<dbReference type="PROSITE" id="PS01217">
    <property type="entry name" value="SUCCINYL_COA_LIG_3"/>
    <property type="match status" value="1"/>
</dbReference>
<comment type="function">
    <text evidence="1">Succinyl-CoA synthetase functions in the citric acid cycle (TCA), coupling the hydrolysis of succinyl-CoA to the synthesis of either ATP or GTP and thus represents the only step of substrate-level phosphorylation in the TCA. The beta subunit provides nucleotide specificity of the enzyme and binds the substrate succinate, while the binding sites for coenzyme A and phosphate are found in the alpha subunit.</text>
</comment>
<comment type="catalytic activity">
    <reaction evidence="1">
        <text>succinate + ATP + CoA = succinyl-CoA + ADP + phosphate</text>
        <dbReference type="Rhea" id="RHEA:17661"/>
        <dbReference type="ChEBI" id="CHEBI:30031"/>
        <dbReference type="ChEBI" id="CHEBI:30616"/>
        <dbReference type="ChEBI" id="CHEBI:43474"/>
        <dbReference type="ChEBI" id="CHEBI:57287"/>
        <dbReference type="ChEBI" id="CHEBI:57292"/>
        <dbReference type="ChEBI" id="CHEBI:456216"/>
        <dbReference type="EC" id="6.2.1.5"/>
    </reaction>
    <physiologicalReaction direction="right-to-left" evidence="1">
        <dbReference type="Rhea" id="RHEA:17663"/>
    </physiologicalReaction>
</comment>
<comment type="catalytic activity">
    <reaction evidence="1">
        <text>GTP + succinate + CoA = succinyl-CoA + GDP + phosphate</text>
        <dbReference type="Rhea" id="RHEA:22120"/>
        <dbReference type="ChEBI" id="CHEBI:30031"/>
        <dbReference type="ChEBI" id="CHEBI:37565"/>
        <dbReference type="ChEBI" id="CHEBI:43474"/>
        <dbReference type="ChEBI" id="CHEBI:57287"/>
        <dbReference type="ChEBI" id="CHEBI:57292"/>
        <dbReference type="ChEBI" id="CHEBI:58189"/>
    </reaction>
    <physiologicalReaction direction="right-to-left" evidence="1">
        <dbReference type="Rhea" id="RHEA:22122"/>
    </physiologicalReaction>
</comment>
<comment type="cofactor">
    <cofactor evidence="1">
        <name>Mg(2+)</name>
        <dbReference type="ChEBI" id="CHEBI:18420"/>
    </cofactor>
    <text evidence="1">Binds 1 Mg(2+) ion per subunit.</text>
</comment>
<comment type="pathway">
    <text evidence="1">Carbohydrate metabolism; tricarboxylic acid cycle; succinate from succinyl-CoA (ligase route): step 1/1.</text>
</comment>
<comment type="subunit">
    <text evidence="1">Heterotetramer of two alpha and two beta subunits.</text>
</comment>
<comment type="similarity">
    <text evidence="1">Belongs to the succinate/malate CoA ligase beta subunit family.</text>
</comment>
<keyword id="KW-0067">ATP-binding</keyword>
<keyword id="KW-0436">Ligase</keyword>
<keyword id="KW-0460">Magnesium</keyword>
<keyword id="KW-0479">Metal-binding</keyword>
<keyword id="KW-0547">Nucleotide-binding</keyword>
<keyword id="KW-1185">Reference proteome</keyword>
<keyword id="KW-0816">Tricarboxylic acid cycle</keyword>
<protein>
    <recommendedName>
        <fullName evidence="1">Succinate--CoA ligase [ADP-forming] subunit beta</fullName>
        <ecNumber evidence="1">6.2.1.5</ecNumber>
    </recommendedName>
    <alternativeName>
        <fullName evidence="1">Succinyl-CoA synthetase subunit beta</fullName>
        <shortName evidence="1">SCS-beta</shortName>
    </alternativeName>
</protein>
<reference key="1">
    <citation type="submission" date="2007-11" db="EMBL/GenBank/DDBJ databases">
        <title>Complete sequence of Delftia acidovorans DSM 14801 / SPH-1.</title>
        <authorList>
            <person name="Copeland A."/>
            <person name="Lucas S."/>
            <person name="Lapidus A."/>
            <person name="Barry K."/>
            <person name="Glavina del Rio T."/>
            <person name="Dalin E."/>
            <person name="Tice H."/>
            <person name="Pitluck S."/>
            <person name="Lowry S."/>
            <person name="Clum A."/>
            <person name="Schmutz J."/>
            <person name="Larimer F."/>
            <person name="Land M."/>
            <person name="Hauser L."/>
            <person name="Kyrpides N."/>
            <person name="Kim E."/>
            <person name="Schleheck D."/>
            <person name="Richardson P."/>
        </authorList>
    </citation>
    <scope>NUCLEOTIDE SEQUENCE [LARGE SCALE GENOMIC DNA]</scope>
    <source>
        <strain>DSM 14801 / SPH-1</strain>
    </source>
</reference>
<proteinExistence type="inferred from homology"/>
<gene>
    <name evidence="1" type="primary">sucC</name>
    <name type="ordered locus">Daci_0869</name>
</gene>
<accession>A9BQA5</accession>
<name>SUCC_DELAS</name>
<sequence length="386" mass="41167">MKIHEYQGKDILRQFGVPVPRGIPAFTVQEAVEAAQKLGGPVWVVKAQIHAGGRGKGGGVKVAKSIDDVKALAGQILGMQLVTHQTGPEGQKVRRLYIEDGADIQKEYYLSCVTDRGTQKVAFIASSEGGMDIEEVAHSTPEKIITIFVDPLVGLTQAQGEELAKGIGMPADSTAQFIDICQKLYKCYMDTDASLVEINPLNRDSKGNVVALDAKFNFDANALFRLPEIVALRDLDEEDPAEVEASKFDLAYISLDGNIGCLVNGAGLAMATMDTIKLFGGEPANFLDVGGGATPEKVTEAFKIMLKNPKVEGILVNIFGGIMKCDTIATGVITACKAVNLQVPLVVRMKGTNEELGKKMLAESGLPIISADTMAEAATKIVEAVK</sequence>